<keyword id="KW-0002">3D-structure</keyword>
<keyword id="KW-0165">Cleavage on pair of basic residues</keyword>
<keyword id="KW-0903">Direct protein sequencing</keyword>
<keyword id="KW-1015">Disulfide bond</keyword>
<keyword id="KW-0378">Hydrolase</keyword>
<keyword id="KW-0479">Metal-binding</keyword>
<keyword id="KW-0482">Metalloprotease</keyword>
<keyword id="KW-0645">Protease</keyword>
<keyword id="KW-1185">Reference proteome</keyword>
<keyword id="KW-0732">Signal</keyword>
<keyword id="KW-0862">Zinc</keyword>
<keyword id="KW-0865">Zymogen</keyword>
<gene>
    <name type="ORF">AO090010000493</name>
</gene>
<organism>
    <name type="scientific">Aspergillus oryzae (strain ATCC 42149 / RIB 40)</name>
    <name type="common">Yellow koji mold</name>
    <dbReference type="NCBI Taxonomy" id="510516"/>
    <lineage>
        <taxon>Eukaryota</taxon>
        <taxon>Fungi</taxon>
        <taxon>Dikarya</taxon>
        <taxon>Ascomycota</taxon>
        <taxon>Pezizomycotina</taxon>
        <taxon>Eurotiomycetes</taxon>
        <taxon>Eurotiomycetidae</taxon>
        <taxon>Eurotiales</taxon>
        <taxon>Aspergillaceae</taxon>
        <taxon>Aspergillus</taxon>
        <taxon>Aspergillus subgen. Circumdati</taxon>
    </lineage>
</organism>
<sequence length="352" mass="37502">MRVTTLSTALFALASTAVSAPTAGSSSPGLEVKLTQIDNTRVKAVVKNTGSEEVSFVHLNFFKDAGPVKKVSIYRGQDEVQFEGIKRRLRSSGITKEAVTSLGAGETLEDEFDIASTSDLASGGPVSIRSHGFVPIVVDGKITGYIPYKSNDLTVNVDGGKAAKVTKALSQLTRRTEVTDCKGDAESSLTTALSNAAKLANQAAEAAESGDESKFEEYFKTTDQQTRTTVAERLRAVAKEAGSTSGGSTTYHCNDPYGYCEPNVLAYTLPSKNEIANCDIYYSELPPLAQKCHAQDQATTTLHEFTHAPGVYQPGTEDLGYGYDAATQLSAQDALNNADSYALYANAIELKC</sequence>
<proteinExistence type="evidence at protein level"/>
<evidence type="ECO:0000255" key="1"/>
<evidence type="ECO:0000269" key="2">
    <source>
    </source>
</evidence>
<evidence type="ECO:0000269" key="3">
    <source>
    </source>
</evidence>
<evidence type="ECO:0000269" key="4">
    <source>
    </source>
</evidence>
<evidence type="ECO:0000305" key="5"/>
<evidence type="ECO:0007744" key="6">
    <source>
        <dbReference type="PDB" id="1EB6"/>
    </source>
</evidence>
<evidence type="ECO:0007829" key="7">
    <source>
        <dbReference type="PDB" id="1EB6"/>
    </source>
</evidence>
<reference key="1">
    <citation type="journal article" date="1991" name="Mol. Gen. Genet.">
        <title>Cloning and expression in yeast of a cDNA clone encoding Aspergillus oryzae neutral protease II, a unique metalloprotease.</title>
        <authorList>
            <person name="Tatsumi H."/>
            <person name="Murakami S."/>
            <person name="Tsuji R.F."/>
            <person name="Ishida Y."/>
            <person name="Murakami K."/>
            <person name="Masaki A."/>
            <person name="Kawabe H."/>
            <person name="Arimura H."/>
            <person name="Nakano E."/>
            <person name="Motai H."/>
        </authorList>
    </citation>
    <scope>NUCLEOTIDE SEQUENCE [MRNA]</scope>
    <scope>PROTEIN SEQUENCE OF 176-210; 279-281 AND 304-341</scope>
    <source>
        <strain>ATCC 20386 / 460</strain>
    </source>
</reference>
<reference key="2">
    <citation type="journal article" date="2005" name="Nature">
        <title>Genome sequencing and analysis of Aspergillus oryzae.</title>
        <authorList>
            <person name="Machida M."/>
            <person name="Asai K."/>
            <person name="Sano M."/>
            <person name="Tanaka T."/>
            <person name="Kumagai T."/>
            <person name="Terai G."/>
            <person name="Kusumoto K."/>
            <person name="Arima T."/>
            <person name="Akita O."/>
            <person name="Kashiwagi Y."/>
            <person name="Abe K."/>
            <person name="Gomi K."/>
            <person name="Horiuchi H."/>
            <person name="Kitamoto K."/>
            <person name="Kobayashi T."/>
            <person name="Takeuchi M."/>
            <person name="Denning D.W."/>
            <person name="Galagan J.E."/>
            <person name="Nierman W.C."/>
            <person name="Yu J."/>
            <person name="Archer D.B."/>
            <person name="Bennett J.W."/>
            <person name="Bhatnagar D."/>
            <person name="Cleveland T.E."/>
            <person name="Fedorova N.D."/>
            <person name="Gotoh O."/>
            <person name="Horikawa H."/>
            <person name="Hosoyama A."/>
            <person name="Ichinomiya M."/>
            <person name="Igarashi R."/>
            <person name="Iwashita K."/>
            <person name="Juvvadi P.R."/>
            <person name="Kato M."/>
            <person name="Kato Y."/>
            <person name="Kin T."/>
            <person name="Kokubun A."/>
            <person name="Maeda H."/>
            <person name="Maeyama N."/>
            <person name="Maruyama J."/>
            <person name="Nagasaki H."/>
            <person name="Nakajima T."/>
            <person name="Oda K."/>
            <person name="Okada K."/>
            <person name="Paulsen I."/>
            <person name="Sakamoto K."/>
            <person name="Sawano T."/>
            <person name="Takahashi M."/>
            <person name="Takase K."/>
            <person name="Terabayashi Y."/>
            <person name="Wortman J.R."/>
            <person name="Yamada O."/>
            <person name="Yamagata Y."/>
            <person name="Anazawa H."/>
            <person name="Hata Y."/>
            <person name="Koide Y."/>
            <person name="Komori T."/>
            <person name="Koyama Y."/>
            <person name="Minetoki T."/>
            <person name="Suharnan S."/>
            <person name="Tanaka A."/>
            <person name="Isono K."/>
            <person name="Kuhara S."/>
            <person name="Ogasawara N."/>
            <person name="Kikuchi H."/>
        </authorList>
    </citation>
    <scope>NUCLEOTIDE SEQUENCE [LARGE SCALE GENOMIC DNA]</scope>
    <source>
        <strain>ATCC 42149 / RIB 40</strain>
    </source>
</reference>
<reference key="3">
    <citation type="journal article" date="1994" name="Biochim. Biophys. Acta">
        <title>Elucidation of the thermal stability of the neutral proteinase II from Aspergillus oryzae.</title>
        <authorList>
            <person name="Tatsumi H."/>
            <person name="Ikegaya K."/>
            <person name="Murakami S."/>
            <person name="Kawabe H."/>
            <person name="Nakano E."/>
            <person name="Motai H."/>
        </authorList>
    </citation>
    <scope>PROTEIN SEQUENCE OF 176-352</scope>
    <scope>DISULFIDE BONDS</scope>
    <scope>MUTAGENESIS OF CYS-253</scope>
</reference>
<reference key="4">
    <citation type="journal article" date="2001" name="Acta Crystallogr. D">
        <title>A quick solution: ab initio structure determination of a 19 kDa metalloproteinase using ACORN.</title>
        <authorList>
            <person name="McAuley K.E."/>
            <person name="Jia-Xing Y."/>
            <person name="Dodson E.J."/>
            <person name="Lehmbeck J."/>
            <person name="Ostergaard P.R."/>
            <person name="Wilson K.S."/>
        </authorList>
    </citation>
    <scope>X-RAY CRYSTALLOGRAPHY (1.0 ANGSTROMS) OF 176-352 IN COMPLEX WITH ZINC</scope>
    <scope>COFACTOR</scope>
    <scope>ACTIVE SITE</scope>
</reference>
<protein>
    <recommendedName>
        <fullName>Neutral protease 2</fullName>
        <ecNumber>3.4.24.39</ecNumber>
    </recommendedName>
    <alternativeName>
        <fullName>Deuterolysin</fullName>
    </alternativeName>
    <alternativeName>
        <fullName>Neutral protease II</fullName>
        <shortName>NPII</shortName>
    </alternativeName>
</protein>
<feature type="signal peptide" evidence="1">
    <location>
        <begin position="1"/>
        <end position="19"/>
    </location>
</feature>
<feature type="propeptide" id="PRO_0000029238" evidence="3 4">
    <location>
        <begin position="20"/>
        <end position="175"/>
    </location>
</feature>
<feature type="chain" id="PRO_0000029239" description="Neutral protease 2">
    <location>
        <begin position="176"/>
        <end position="352"/>
    </location>
</feature>
<feature type="active site" evidence="2">
    <location>
        <position position="304"/>
    </location>
</feature>
<feature type="binding site" evidence="2 6">
    <location>
        <position position="303"/>
    </location>
    <ligand>
        <name>Zn(2+)</name>
        <dbReference type="ChEBI" id="CHEBI:29105"/>
        <note>catalytic</note>
    </ligand>
</feature>
<feature type="binding site" evidence="2 6">
    <location>
        <position position="307"/>
    </location>
    <ligand>
        <name>Zn(2+)</name>
        <dbReference type="ChEBI" id="CHEBI:29105"/>
        <note>catalytic</note>
    </ligand>
</feature>
<feature type="binding site" evidence="2 6">
    <location>
        <position position="318"/>
    </location>
    <ligand>
        <name>Zn(2+)</name>
        <dbReference type="ChEBI" id="CHEBI:29105"/>
        <note>catalytic</note>
    </ligand>
</feature>
<feature type="disulfide bond" evidence="4">
    <location>
        <begin position="181"/>
        <end position="253"/>
    </location>
</feature>
<feature type="disulfide bond" evidence="4">
    <location>
        <begin position="260"/>
        <end position="278"/>
    </location>
</feature>
<feature type="disulfide bond" evidence="4">
    <location>
        <begin position="292"/>
        <end position="352"/>
    </location>
</feature>
<feature type="mutagenesis site" description="Optimal activity at 55 degrees Celsius; 10 degrees lower than wild-type." evidence="4">
    <original>C</original>
    <variation>A</variation>
    <location>
        <position position="253"/>
    </location>
</feature>
<feature type="sequence conflict" description="In Ref. 1; AAB19701." evidence="5" ref="1">
    <original>A</original>
    <variation>T</variation>
    <location>
        <position position="14"/>
    </location>
</feature>
<feature type="sequence conflict" description="In Ref. 1; AAB19701." evidence="5" ref="1">
    <original>I</original>
    <variation>V</variation>
    <location>
        <position position="73"/>
    </location>
</feature>
<feature type="strand" evidence="7">
    <location>
        <begin position="177"/>
        <end position="180"/>
    </location>
</feature>
<feature type="helix" evidence="7">
    <location>
        <begin position="184"/>
        <end position="209"/>
    </location>
</feature>
<feature type="helix" evidence="7">
    <location>
        <begin position="212"/>
        <end position="219"/>
    </location>
</feature>
<feature type="helix" evidence="7">
    <location>
        <begin position="224"/>
        <end position="241"/>
    </location>
</feature>
<feature type="strand" evidence="7">
    <location>
        <begin position="250"/>
        <end position="254"/>
    </location>
</feature>
<feature type="strand" evidence="7">
    <location>
        <begin position="256"/>
        <end position="258"/>
    </location>
</feature>
<feature type="strand" evidence="7">
    <location>
        <begin position="266"/>
        <end position="269"/>
    </location>
</feature>
<feature type="helix" evidence="7">
    <location>
        <begin position="270"/>
        <end position="272"/>
    </location>
</feature>
<feature type="strand" evidence="7">
    <location>
        <begin position="274"/>
        <end position="277"/>
    </location>
</feature>
<feature type="helix" evidence="7">
    <location>
        <begin position="279"/>
        <end position="284"/>
    </location>
</feature>
<feature type="helix" evidence="7">
    <location>
        <begin position="297"/>
        <end position="306"/>
    </location>
</feature>
<feature type="turn" evidence="7">
    <location>
        <begin position="309"/>
        <end position="311"/>
    </location>
</feature>
<feature type="strand" evidence="7">
    <location>
        <begin position="312"/>
        <end position="314"/>
    </location>
</feature>
<feature type="helix" evidence="7">
    <location>
        <begin position="323"/>
        <end position="327"/>
    </location>
</feature>
<feature type="helix" evidence="7">
    <location>
        <begin position="331"/>
        <end position="335"/>
    </location>
</feature>
<feature type="helix" evidence="7">
    <location>
        <begin position="338"/>
        <end position="350"/>
    </location>
</feature>
<accession>P46076</accession>
<accession>Q2TWM9</accession>
<comment type="function">
    <text>Metalloprotease that shows high activities on basic nuclear substrates such as histone and protamine.</text>
</comment>
<comment type="catalytic activity">
    <reaction>
        <text>Preferential cleavage of bonds with hydrophobic residues in P1'. Also 3-Asn-|-Gln-4 and 8-Gly-|-Ser-9 bonds in insulin B chain.</text>
        <dbReference type="EC" id="3.4.24.39"/>
    </reaction>
</comment>
<comment type="cofactor">
    <cofactor evidence="2">
        <name>Zn(2+)</name>
        <dbReference type="ChEBI" id="CHEBI:29105"/>
    </cofactor>
    <text evidence="2">Binds 1 zinc ion per subunit.</text>
</comment>
<comment type="biophysicochemical properties">
    <temperatureDependence>
        <text>Thermostable.</text>
    </temperatureDependence>
</comment>
<comment type="similarity">
    <text evidence="5">Belongs to the peptidase M35 family.</text>
</comment>
<dbReference type="EC" id="3.4.24.39"/>
<dbReference type="EMBL" id="S53810">
    <property type="protein sequence ID" value="AAB19701.1"/>
    <property type="molecule type" value="mRNA"/>
</dbReference>
<dbReference type="EMBL" id="BA000056">
    <property type="protein sequence ID" value="BAE66344.1"/>
    <property type="molecule type" value="Genomic_DNA"/>
</dbReference>
<dbReference type="PIR" id="S16547">
    <property type="entry name" value="S16547"/>
</dbReference>
<dbReference type="RefSeq" id="XP_001827477.1">
    <property type="nucleotide sequence ID" value="XM_001827425.3"/>
</dbReference>
<dbReference type="PDB" id="1EB6">
    <property type="method" value="X-ray"/>
    <property type="resolution" value="1.00 A"/>
    <property type="chains" value="A=176-352"/>
</dbReference>
<dbReference type="PDBsum" id="1EB6"/>
<dbReference type="SMR" id="P46076"/>
<dbReference type="STRING" id="510516.P46076"/>
<dbReference type="MEROPS" id="M35.002"/>
<dbReference type="EnsemblFungi" id="BAE66344">
    <property type="protein sequence ID" value="BAE66344"/>
    <property type="gene ID" value="AO090010000493"/>
</dbReference>
<dbReference type="GeneID" id="5999611"/>
<dbReference type="KEGG" id="aor:AO090010000493"/>
<dbReference type="VEuPathDB" id="FungiDB:AO090010000493"/>
<dbReference type="HOGENOM" id="CLU_039313_1_1_1"/>
<dbReference type="OMA" id="NEIANCD"/>
<dbReference type="OrthoDB" id="105382at5052"/>
<dbReference type="BRENDA" id="3.4.24.39">
    <property type="organism ID" value="522"/>
</dbReference>
<dbReference type="EvolutionaryTrace" id="P46076"/>
<dbReference type="Proteomes" id="UP000006564">
    <property type="component" value="Chromosome 8"/>
</dbReference>
<dbReference type="GO" id="GO:0005576">
    <property type="term" value="C:extracellular region"/>
    <property type="evidence" value="ECO:0000314"/>
    <property type="project" value="AspGD"/>
</dbReference>
<dbReference type="GO" id="GO:0046872">
    <property type="term" value="F:metal ion binding"/>
    <property type="evidence" value="ECO:0007669"/>
    <property type="project" value="UniProtKB-KW"/>
</dbReference>
<dbReference type="GO" id="GO:0004222">
    <property type="term" value="F:metalloendopeptidase activity"/>
    <property type="evidence" value="ECO:0007669"/>
    <property type="project" value="InterPro"/>
</dbReference>
<dbReference type="GO" id="GO:0006508">
    <property type="term" value="P:proteolysis"/>
    <property type="evidence" value="ECO:0007669"/>
    <property type="project" value="UniProtKB-KW"/>
</dbReference>
<dbReference type="CDD" id="cd11008">
    <property type="entry name" value="M35_deuterolysin_like"/>
    <property type="match status" value="1"/>
</dbReference>
<dbReference type="FunFam" id="2.60.40.2970:FF:000001">
    <property type="entry name" value="Neutral protease 2"/>
    <property type="match status" value="1"/>
</dbReference>
<dbReference type="FunFam" id="3.40.390.10:FF:000082">
    <property type="entry name" value="Neutral protease 2"/>
    <property type="match status" value="1"/>
</dbReference>
<dbReference type="Gene3D" id="2.60.40.2970">
    <property type="match status" value="1"/>
</dbReference>
<dbReference type="Gene3D" id="3.40.390.10">
    <property type="entry name" value="Collagenase (Catalytic Domain)"/>
    <property type="match status" value="1"/>
</dbReference>
<dbReference type="InterPro" id="IPR050414">
    <property type="entry name" value="Fungal_M35_metalloproteases"/>
</dbReference>
<dbReference type="InterPro" id="IPR024079">
    <property type="entry name" value="MetalloPept_cat_dom_sf"/>
</dbReference>
<dbReference type="InterPro" id="IPR001384">
    <property type="entry name" value="Peptidase_M35"/>
</dbReference>
<dbReference type="PANTHER" id="PTHR37016">
    <property type="match status" value="1"/>
</dbReference>
<dbReference type="PANTHER" id="PTHR37016:SF3">
    <property type="entry name" value="NEUTRAL PROTEASE 2-RELATED"/>
    <property type="match status" value="1"/>
</dbReference>
<dbReference type="Pfam" id="PF02102">
    <property type="entry name" value="Peptidase_M35"/>
    <property type="match status" value="1"/>
</dbReference>
<dbReference type="PRINTS" id="PR00768">
    <property type="entry name" value="DEUTEROLYSIN"/>
</dbReference>
<dbReference type="SUPFAM" id="SSF55486">
    <property type="entry name" value="Metalloproteases ('zincins'), catalytic domain"/>
    <property type="match status" value="1"/>
</dbReference>
<dbReference type="PROSITE" id="PS00142">
    <property type="entry name" value="ZINC_PROTEASE"/>
    <property type="match status" value="1"/>
</dbReference>
<name>NPII_ASPOR</name>